<protein>
    <recommendedName>
        <fullName>Anaphase-promoting complex subunit 1</fullName>
        <shortName>APC1</shortName>
    </recommendedName>
    <alternativeName>
        <fullName>Cyclosome subunit 1</fullName>
    </alternativeName>
    <alternativeName>
        <fullName>Mitotic checkpoint regulator</fullName>
    </alternativeName>
    <alternativeName>
        <fullName>Testis-specific gene 24 protein</fullName>
    </alternativeName>
</protein>
<proteinExistence type="evidence at protein level"/>
<accession>P53995</accession>
<accession>A2ATQ4</accession>
<accession>Q8BP33</accession>
<accession>Q8C772</accession>
<reference key="1">
    <citation type="journal article" date="1994" name="J. Biol. Chem.">
        <title>A novel murine gene encoding a 216-kDa protein is related to a mitotic checkpoint regulator previously identified in Aspergillus nidulans.</title>
        <authorList>
            <person name="Starborg M."/>
            <person name="Brundell E."/>
            <person name="Gell K."/>
            <person name="Hoeoeg C."/>
        </authorList>
    </citation>
    <scope>NUCLEOTIDE SEQUENCE [MRNA]</scope>
    <scope>TISSUE SPECIFICITY</scope>
    <scope>DEVELOPMENTAL STAGE</scope>
    <source>
        <strain>CBA/J</strain>
        <tissue>Testis</tissue>
    </source>
</reference>
<reference key="2">
    <citation type="journal article" date="2009" name="PLoS Biol.">
        <title>Lineage-specific biology revealed by a finished genome assembly of the mouse.</title>
        <authorList>
            <person name="Church D.M."/>
            <person name="Goodstadt L."/>
            <person name="Hillier L.W."/>
            <person name="Zody M.C."/>
            <person name="Goldstein S."/>
            <person name="She X."/>
            <person name="Bult C.J."/>
            <person name="Agarwala R."/>
            <person name="Cherry J.L."/>
            <person name="DiCuccio M."/>
            <person name="Hlavina W."/>
            <person name="Kapustin Y."/>
            <person name="Meric P."/>
            <person name="Maglott D."/>
            <person name="Birtle Z."/>
            <person name="Marques A.C."/>
            <person name="Graves T."/>
            <person name="Zhou S."/>
            <person name="Teague B."/>
            <person name="Potamousis K."/>
            <person name="Churas C."/>
            <person name="Place M."/>
            <person name="Herschleb J."/>
            <person name="Runnheim R."/>
            <person name="Forrest D."/>
            <person name="Amos-Landgraf J."/>
            <person name="Schwartz D.C."/>
            <person name="Cheng Z."/>
            <person name="Lindblad-Toh K."/>
            <person name="Eichler E.E."/>
            <person name="Ponting C.P."/>
        </authorList>
    </citation>
    <scope>NUCLEOTIDE SEQUENCE [LARGE SCALE GENOMIC DNA]</scope>
    <source>
        <strain>C57BL/6J</strain>
    </source>
</reference>
<reference key="3">
    <citation type="submission" date="2005-07" db="EMBL/GenBank/DDBJ databases">
        <authorList>
            <person name="Mural R.J."/>
            <person name="Adams M.D."/>
            <person name="Myers E.W."/>
            <person name="Smith H.O."/>
            <person name="Venter J.C."/>
        </authorList>
    </citation>
    <scope>NUCLEOTIDE SEQUENCE [LARGE SCALE GENOMIC DNA]</scope>
</reference>
<reference key="4">
    <citation type="journal article" date="2004" name="Genome Res.">
        <title>The status, quality, and expansion of the NIH full-length cDNA project: the Mammalian Gene Collection (MGC).</title>
        <authorList>
            <consortium name="The MGC Project Team"/>
        </authorList>
    </citation>
    <scope>NUCLEOTIDE SEQUENCE [LARGE SCALE MRNA]</scope>
</reference>
<reference key="5">
    <citation type="journal article" date="2005" name="Science">
        <title>The transcriptional landscape of the mammalian genome.</title>
        <authorList>
            <person name="Carninci P."/>
            <person name="Kasukawa T."/>
            <person name="Katayama S."/>
            <person name="Gough J."/>
            <person name="Frith M.C."/>
            <person name="Maeda N."/>
            <person name="Oyama R."/>
            <person name="Ravasi T."/>
            <person name="Lenhard B."/>
            <person name="Wells C."/>
            <person name="Kodzius R."/>
            <person name="Shimokawa K."/>
            <person name="Bajic V.B."/>
            <person name="Brenner S.E."/>
            <person name="Batalov S."/>
            <person name="Forrest A.R."/>
            <person name="Zavolan M."/>
            <person name="Davis M.J."/>
            <person name="Wilming L.G."/>
            <person name="Aidinis V."/>
            <person name="Allen J.E."/>
            <person name="Ambesi-Impiombato A."/>
            <person name="Apweiler R."/>
            <person name="Aturaliya R.N."/>
            <person name="Bailey T.L."/>
            <person name="Bansal M."/>
            <person name="Baxter L."/>
            <person name="Beisel K.W."/>
            <person name="Bersano T."/>
            <person name="Bono H."/>
            <person name="Chalk A.M."/>
            <person name="Chiu K.P."/>
            <person name="Choudhary V."/>
            <person name="Christoffels A."/>
            <person name="Clutterbuck D.R."/>
            <person name="Crowe M.L."/>
            <person name="Dalla E."/>
            <person name="Dalrymple B.P."/>
            <person name="de Bono B."/>
            <person name="Della Gatta G."/>
            <person name="di Bernardo D."/>
            <person name="Down T."/>
            <person name="Engstrom P."/>
            <person name="Fagiolini M."/>
            <person name="Faulkner G."/>
            <person name="Fletcher C.F."/>
            <person name="Fukushima T."/>
            <person name="Furuno M."/>
            <person name="Futaki S."/>
            <person name="Gariboldi M."/>
            <person name="Georgii-Hemming P."/>
            <person name="Gingeras T.R."/>
            <person name="Gojobori T."/>
            <person name="Green R.E."/>
            <person name="Gustincich S."/>
            <person name="Harbers M."/>
            <person name="Hayashi Y."/>
            <person name="Hensch T.K."/>
            <person name="Hirokawa N."/>
            <person name="Hill D."/>
            <person name="Huminiecki L."/>
            <person name="Iacono M."/>
            <person name="Ikeo K."/>
            <person name="Iwama A."/>
            <person name="Ishikawa T."/>
            <person name="Jakt M."/>
            <person name="Kanapin A."/>
            <person name="Katoh M."/>
            <person name="Kawasawa Y."/>
            <person name="Kelso J."/>
            <person name="Kitamura H."/>
            <person name="Kitano H."/>
            <person name="Kollias G."/>
            <person name="Krishnan S.P."/>
            <person name="Kruger A."/>
            <person name="Kummerfeld S.K."/>
            <person name="Kurochkin I.V."/>
            <person name="Lareau L.F."/>
            <person name="Lazarevic D."/>
            <person name="Lipovich L."/>
            <person name="Liu J."/>
            <person name="Liuni S."/>
            <person name="McWilliam S."/>
            <person name="Madan Babu M."/>
            <person name="Madera M."/>
            <person name="Marchionni L."/>
            <person name="Matsuda H."/>
            <person name="Matsuzawa S."/>
            <person name="Miki H."/>
            <person name="Mignone F."/>
            <person name="Miyake S."/>
            <person name="Morris K."/>
            <person name="Mottagui-Tabar S."/>
            <person name="Mulder N."/>
            <person name="Nakano N."/>
            <person name="Nakauchi H."/>
            <person name="Ng P."/>
            <person name="Nilsson R."/>
            <person name="Nishiguchi S."/>
            <person name="Nishikawa S."/>
            <person name="Nori F."/>
            <person name="Ohara O."/>
            <person name="Okazaki Y."/>
            <person name="Orlando V."/>
            <person name="Pang K.C."/>
            <person name="Pavan W.J."/>
            <person name="Pavesi G."/>
            <person name="Pesole G."/>
            <person name="Petrovsky N."/>
            <person name="Piazza S."/>
            <person name="Reed J."/>
            <person name="Reid J.F."/>
            <person name="Ring B.Z."/>
            <person name="Ringwald M."/>
            <person name="Rost B."/>
            <person name="Ruan Y."/>
            <person name="Salzberg S.L."/>
            <person name="Sandelin A."/>
            <person name="Schneider C."/>
            <person name="Schoenbach C."/>
            <person name="Sekiguchi K."/>
            <person name="Semple C.A."/>
            <person name="Seno S."/>
            <person name="Sessa L."/>
            <person name="Sheng Y."/>
            <person name="Shibata Y."/>
            <person name="Shimada H."/>
            <person name="Shimada K."/>
            <person name="Silva D."/>
            <person name="Sinclair B."/>
            <person name="Sperling S."/>
            <person name="Stupka E."/>
            <person name="Sugiura K."/>
            <person name="Sultana R."/>
            <person name="Takenaka Y."/>
            <person name="Taki K."/>
            <person name="Tammoja K."/>
            <person name="Tan S.L."/>
            <person name="Tang S."/>
            <person name="Taylor M.S."/>
            <person name="Tegner J."/>
            <person name="Teichmann S.A."/>
            <person name="Ueda H.R."/>
            <person name="van Nimwegen E."/>
            <person name="Verardo R."/>
            <person name="Wei C.L."/>
            <person name="Yagi K."/>
            <person name="Yamanishi H."/>
            <person name="Zabarovsky E."/>
            <person name="Zhu S."/>
            <person name="Zimmer A."/>
            <person name="Hide W."/>
            <person name="Bult C."/>
            <person name="Grimmond S.M."/>
            <person name="Teasdale R.D."/>
            <person name="Liu E.T."/>
            <person name="Brusic V."/>
            <person name="Quackenbush J."/>
            <person name="Wahlestedt C."/>
            <person name="Mattick J.S."/>
            <person name="Hume D.A."/>
            <person name="Kai C."/>
            <person name="Sasaki D."/>
            <person name="Tomaru Y."/>
            <person name="Fukuda S."/>
            <person name="Kanamori-Katayama M."/>
            <person name="Suzuki M."/>
            <person name="Aoki J."/>
            <person name="Arakawa T."/>
            <person name="Iida J."/>
            <person name="Imamura K."/>
            <person name="Itoh M."/>
            <person name="Kato T."/>
            <person name="Kawaji H."/>
            <person name="Kawagashira N."/>
            <person name="Kawashima T."/>
            <person name="Kojima M."/>
            <person name="Kondo S."/>
            <person name="Konno H."/>
            <person name="Nakano K."/>
            <person name="Ninomiya N."/>
            <person name="Nishio T."/>
            <person name="Okada M."/>
            <person name="Plessy C."/>
            <person name="Shibata K."/>
            <person name="Shiraki T."/>
            <person name="Suzuki S."/>
            <person name="Tagami M."/>
            <person name="Waki K."/>
            <person name="Watahiki A."/>
            <person name="Okamura-Oho Y."/>
            <person name="Suzuki H."/>
            <person name="Kawai J."/>
            <person name="Hayashizaki Y."/>
        </authorList>
    </citation>
    <scope>NUCLEOTIDE SEQUENCE [LARGE SCALE MRNA] OF 1-1063</scope>
    <source>
        <strain>C57BL/6J</strain>
        <tissue>Embryonic lung</tissue>
        <tissue>Forelimb</tissue>
    </source>
</reference>
<reference key="6">
    <citation type="journal article" date="2010" name="Cell">
        <title>A tissue-specific atlas of mouse protein phosphorylation and expression.</title>
        <authorList>
            <person name="Huttlin E.L."/>
            <person name="Jedrychowski M.P."/>
            <person name="Elias J.E."/>
            <person name="Goswami T."/>
            <person name="Rad R."/>
            <person name="Beausoleil S.A."/>
            <person name="Villen J."/>
            <person name="Haas W."/>
            <person name="Sowa M.E."/>
            <person name="Gygi S.P."/>
        </authorList>
    </citation>
    <scope>PHOSPHORYLATION [LARGE SCALE ANALYSIS] AT SER-377; SER-547; SER-680 AND SER-688</scope>
    <scope>IDENTIFICATION BY MASS SPECTROMETRY [LARGE SCALE ANALYSIS]</scope>
    <source>
        <tissue>Brain</tissue>
        <tissue>Brown adipose tissue</tissue>
        <tissue>Heart</tissue>
        <tissue>Kidney</tissue>
        <tissue>Lung</tissue>
        <tissue>Pancreas</tissue>
        <tissue>Spleen</tissue>
        <tissue>Testis</tissue>
    </source>
</reference>
<feature type="chain" id="PRO_0000215872" description="Anaphase-promoting complex subunit 1">
    <location>
        <begin position="1"/>
        <end position="1944"/>
    </location>
</feature>
<feature type="repeat" description="PC 1">
    <location>
        <begin position="1297"/>
        <end position="1325"/>
    </location>
</feature>
<feature type="repeat" description="PC 2">
    <location>
        <begin position="1366"/>
        <end position="1404"/>
    </location>
</feature>
<feature type="repeat" description="PC 3">
    <location>
        <begin position="1467"/>
        <end position="1501"/>
    </location>
</feature>
<feature type="repeat" description="PC 4">
    <location>
        <begin position="1520"/>
        <end position="1552"/>
    </location>
</feature>
<feature type="region of interest" description="Disordered" evidence="2">
    <location>
        <begin position="312"/>
        <end position="343"/>
    </location>
</feature>
<feature type="region of interest" description="Disordered" evidence="2">
    <location>
        <begin position="370"/>
        <end position="395"/>
    </location>
</feature>
<feature type="region of interest" description="Disordered" evidence="2">
    <location>
        <begin position="991"/>
        <end position="1014"/>
    </location>
</feature>
<feature type="compositionally biased region" description="Low complexity" evidence="2">
    <location>
        <begin position="323"/>
        <end position="343"/>
    </location>
</feature>
<feature type="compositionally biased region" description="Polar residues" evidence="2">
    <location>
        <begin position="384"/>
        <end position="393"/>
    </location>
</feature>
<feature type="compositionally biased region" description="Polar residues" evidence="2">
    <location>
        <begin position="998"/>
        <end position="1007"/>
    </location>
</feature>
<feature type="modified residue" description="Phosphoserine" evidence="1">
    <location>
        <position position="51"/>
    </location>
</feature>
<feature type="modified residue" description="Phosphoserine" evidence="1">
    <location>
        <position position="60"/>
    </location>
</feature>
<feature type="modified residue" description="Phosphothreonine" evidence="1">
    <location>
        <position position="291"/>
    </location>
</feature>
<feature type="modified residue" description="Phosphoserine" evidence="1">
    <location>
        <position position="313"/>
    </location>
</feature>
<feature type="modified residue" description="Phosphoserine" evidence="1">
    <location>
        <position position="341"/>
    </location>
</feature>
<feature type="modified residue" description="Phosphoserine" evidence="1">
    <location>
        <position position="343"/>
    </location>
</feature>
<feature type="modified residue" description="Phosphoserine" evidence="1">
    <location>
        <position position="355"/>
    </location>
</feature>
<feature type="modified residue" description="Phosphoserine" evidence="1">
    <location>
        <position position="362"/>
    </location>
</feature>
<feature type="modified residue" description="Phosphoserine" evidence="1">
    <location>
        <position position="373"/>
    </location>
</feature>
<feature type="modified residue" description="Phosphoserine" evidence="5">
    <location>
        <position position="377"/>
    </location>
</feature>
<feature type="modified residue" description="Phosphothreonine" evidence="1">
    <location>
        <position position="537"/>
    </location>
</feature>
<feature type="modified residue" description="Phosphoserine" evidence="5">
    <location>
        <position position="547"/>
    </location>
</feature>
<feature type="modified residue" description="Phosphoserine" evidence="1">
    <location>
        <position position="555"/>
    </location>
</feature>
<feature type="modified residue" description="Phosphotyrosine" evidence="1">
    <location>
        <position position="571"/>
    </location>
</feature>
<feature type="modified residue" description="Phosphoserine" evidence="5">
    <location>
        <position position="680"/>
    </location>
</feature>
<feature type="modified residue" description="Phosphoserine" evidence="1">
    <location>
        <position position="686"/>
    </location>
</feature>
<feature type="modified residue" description="Phosphoserine" evidence="5">
    <location>
        <position position="688"/>
    </location>
</feature>
<feature type="sequence conflict" description="In Ref. 1; CAA56450." evidence="4" ref="1">
    <original>A</original>
    <variation>Q</variation>
    <location>
        <position position="112"/>
    </location>
</feature>
<feature type="sequence conflict" description="In Ref. 1; CAA56450." evidence="4" ref="1">
    <original>AA</original>
    <variation>GV</variation>
    <location>
        <begin position="348"/>
        <end position="349"/>
    </location>
</feature>
<feature type="sequence conflict" description="In Ref. 5; BAC34976." evidence="4" ref="5">
    <original>N</original>
    <variation>K</variation>
    <location>
        <position position="643"/>
    </location>
</feature>
<feature type="sequence conflict" description="In Ref. 1; CAA56450." evidence="4" ref="1">
    <original>D</original>
    <variation>H</variation>
    <location>
        <position position="1036"/>
    </location>
</feature>
<keyword id="KW-0131">Cell cycle</keyword>
<keyword id="KW-0132">Cell division</keyword>
<keyword id="KW-0498">Mitosis</keyword>
<keyword id="KW-0597">Phosphoprotein</keyword>
<keyword id="KW-1185">Reference proteome</keyword>
<keyword id="KW-0677">Repeat</keyword>
<keyword id="KW-0833">Ubl conjugation pathway</keyword>
<sequence length="1944" mass="215994">MSNFSEERATMIAAGDLQEFVPFGRDHCKHHPNALNLQLRQLQPASELWSSDGAAGLVGSLQEVTIHEKQKESWQLRKGVSEIGDAADYDEELYVAGNMVIWSKGSKSQALAVYKAFTVDSTVQQALWCDFIISQDKSEKIYKSHELEKCICILQSSCMNMHSIDGKDYIASLPFQVANVWATKYGLLFERCSSSHEVPPSLPREPLPTMFSMLHPLDEITPLVCKSGSLFGSSRVQYVVDPAVKIVFLNIDPSIVMTYDAVQNVHSVWTLRRVKPEEENAVLKFPEQAGTLQNATTSSSLTAHLRSLSKGESPVASPFQNYSSIHSQSRSTSSPSLHSRSPSISNMAALSRAHSPALGVHSFSGAQRFNLSSHSQSPKRHSISHSPSGSFNDSFLAPETEPIVPELCIDHLWTETLPNIREKNSQASKVFITTDLCGQKFLCFLVEAQLQLRCVKFQESNDKTQLIFGSVTNIHAKDAAPVEKIHTMLVLEGNGNLVLYTGVVRVGKVFIPGLPAPSLTMSNMMPRPSTPLDGVGTPKPLSKLLGSMDEVVLLSPVPELRDSSKLNDSLYNEDCTFQQLGTYIHSVRDPVHNRVTLELSNGSMVRITIPEVATSELVQTCLQAIKFILPKEVAIQVLVKWYNVHSAPGGPSCHSEWSLFVICLLNMMGYNTDRLAWTRSFDFEGSLSPVIAPKKARPSDTGSDEDWEYLLNSEYHRNVESHLLNKSLCLTALEVSNAKDEDFSQNLSLDSSTLLFAHIPAIFFVLHLVYEELKLNTLMGEGICSLIDLLVQLARDLKLDSYLDHYYRDSPTLVKTTGQVCTIDQGQMGFMHHPPFFTSEPPSIYQWVSSCLKGEGMPPYPYLPGICERSRLVVLSIALYTLGDESCVSDETCQYLSKVTSTPQKPQAEQEENRFTFRHSASVSVLAERLVVWMASVGFTLRDLETLPFGIALPIRDAIYHCREQPDSDWSEAVCLLIGRQDLSKQACEGNLPRGKSVLSSEVSSGTEAEEEDDGMNDLNHEVMSLIWSEDLRVQDVRRLLQSAQPVRVNVVQYPELSDHEFIEEKENRLLQLCQRTMALPVGRGMFTLFSYHPVPTEPLPVPKLNLTGRAPPRNTTVDLNSGNIDVPPNMASWASFHNGVAAGLKIAPASQIDSAWIVYNKPKHAELANEYAGFLMALGLNGHLTKLATLNIHDYLTKGHEMTSIGLLLGVSAAKLGTMDMSITRLLSIHVPALLPPTSTELDVPHNVQVAAVVGIGLVYQGTAHRHTAEVLLAEIGRPPGPEMEYCTDRESYSLAAGLALGMVCLGHGSNLIGMSDLNVPEQLYQYMVGGHRRFQTGMHREKHKSPSYQIKEGDTINVDVTCPGATLALAMIYLKTNNRSIADWLRAPDTMYLLDFVKPEFLLLRTLARCLILWDDILPNSKWVDSNVPQIIRENSISLSEIELPCSEDLNLETLSQAHVYIIAGACLSLGFRFAGSENLSAFSCLHKFAKDFMNYLSAPNASVTGPYNLETCLSVVLLSLAMVMAGSGNLKVLQLCRFLHMKTGGEMNYGFHLAHHMALGLLFLGGGRYSLSTSNSSIAALLCALYPHFPAHSTDNRYHLQALRHLYVLAAEPRLLVPVDVDTNTPCYALIEVTYKGTQWYEQTKEELMAPTLLPELHLLKQMKVKGPRYWELLIDLSKGEQHLRSILSKDGVLYVKLRAGQLSYKEDPMGWQSLLAQTVANRNSEARAFKPETISSFTSDPALLSFAEYFCKPTVSMGPKQEILDLFSSILYECVAQETPEMLPAYIAMDQALRSLKKRDMSDTSDLWQIKLILEFFSSRSHQDRQHTYPKRGLFINSEFLPVVKCTVDATLDQWLQAGGDVCVHAYLSGQPVEKSQLNMLACFLVYHSVPAPRHLPPMGLEGSTSFAELLYRFRHLKMPVRALLRLAPVLLGNPQPMVM</sequence>
<comment type="function">
    <text evidence="1">Component of the anaphase promoting complex/cyclosome (APC/C), a cell cycle-regulated E3 ubiquitin ligase that controls progression through mitosis and the G1 phase of the cell cycle. The APC/C complex acts by mediating ubiquitination and subsequent degradation of target proteins: it mainly mediates the formation of 'Lys-11'-linked polyubiquitin chains and, to a lower extent, the formation of 'Lys-48'- and 'Lys-63'-linked polyubiquitin chains. The APC/C complex catalyzes assembly of branched 'Lys-11'-/'Lys-48'-linked branched ubiquitin chains on target proteins.</text>
</comment>
<comment type="pathway">
    <text evidence="1">Protein modification; protein ubiquitination.</text>
</comment>
<comment type="subunit">
    <text evidence="1">The mammalian APC/C is composed at least of 14 distinct subunits ANAPC1, ANAPC2, CDC27/APC3, ANAPC4, ANAPC5, CDC16/APC6, ANAPC7, CDC23/APC8, ANAPC10, ANAPC11, CDC26/APC12, ANAPC13, ANAPC15 and ANAPC16 that assemble into a complex of at least 19 chains with a combined molecular mass of around 1.2 MDa; APC/C interacts with FZR1 and FBXO5.</text>
</comment>
<comment type="tissue specificity">
    <text evidence="3">Abundantly expressed in proliferating fibroblasts, juvenile testis, adult brain and epididymis.</text>
</comment>
<comment type="developmental stage">
    <text evidence="3">Uniformly expressed throughout interphase of the cell cycle.</text>
</comment>
<comment type="PTM">
    <text evidence="1">Phosphorylated. Phosphorylation on Ser-355 occurs specifically during mitosis (By similarity).</text>
</comment>
<comment type="similarity">
    <text evidence="4">Belongs to the APC1 family.</text>
</comment>
<dbReference type="EMBL" id="X80169">
    <property type="protein sequence ID" value="CAA56450.1"/>
    <property type="molecule type" value="mRNA"/>
</dbReference>
<dbReference type="EMBL" id="AL928910">
    <property type="status" value="NOT_ANNOTATED_CDS"/>
    <property type="molecule type" value="Genomic_DNA"/>
</dbReference>
<dbReference type="EMBL" id="CH466519">
    <property type="protein sequence ID" value="EDL28216.1"/>
    <property type="molecule type" value="Genomic_DNA"/>
</dbReference>
<dbReference type="EMBL" id="BC139002">
    <property type="protein sequence ID" value="AAI39003.1"/>
    <property type="molecule type" value="mRNA"/>
</dbReference>
<dbReference type="EMBL" id="AK052404">
    <property type="protein sequence ID" value="BAC34976.1"/>
    <property type="molecule type" value="mRNA"/>
</dbReference>
<dbReference type="EMBL" id="AK077847">
    <property type="protein sequence ID" value="BAC37032.2"/>
    <property type="molecule type" value="mRNA"/>
</dbReference>
<dbReference type="CCDS" id="CCDS16715.1"/>
<dbReference type="PIR" id="A55117">
    <property type="entry name" value="A55117"/>
</dbReference>
<dbReference type="RefSeq" id="NP_032595.2">
    <property type="nucleotide sequence ID" value="NM_008569.2"/>
</dbReference>
<dbReference type="SMR" id="P53995"/>
<dbReference type="BioGRID" id="201352">
    <property type="interactions" value="23"/>
</dbReference>
<dbReference type="CORUM" id="P53995"/>
<dbReference type="FunCoup" id="P53995">
    <property type="interactions" value="3840"/>
</dbReference>
<dbReference type="IntAct" id="P53995">
    <property type="interactions" value="1"/>
</dbReference>
<dbReference type="STRING" id="10090.ENSMUSP00000014499"/>
<dbReference type="GlyGen" id="P53995">
    <property type="glycosylation" value="4 sites, 4 N-linked glycans (4 sites)"/>
</dbReference>
<dbReference type="iPTMnet" id="P53995"/>
<dbReference type="PhosphoSitePlus" id="P53995"/>
<dbReference type="jPOST" id="P53995"/>
<dbReference type="PaxDb" id="10090-ENSMUSP00000014499"/>
<dbReference type="ProteomicsDB" id="281825"/>
<dbReference type="Pumba" id="P53995"/>
<dbReference type="Antibodypedia" id="18056">
    <property type="antibodies" value="473 antibodies from 36 providers"/>
</dbReference>
<dbReference type="DNASU" id="17222"/>
<dbReference type="Ensembl" id="ENSMUST00000014499.10">
    <property type="protein sequence ID" value="ENSMUSP00000014499.4"/>
    <property type="gene ID" value="ENSMUSG00000014355.11"/>
</dbReference>
<dbReference type="GeneID" id="17222"/>
<dbReference type="KEGG" id="mmu:17222"/>
<dbReference type="UCSC" id="uc008mgq.2">
    <property type="organism name" value="mouse"/>
</dbReference>
<dbReference type="AGR" id="MGI:103097"/>
<dbReference type="CTD" id="64682"/>
<dbReference type="MGI" id="MGI:103097">
    <property type="gene designation" value="Anapc1"/>
</dbReference>
<dbReference type="VEuPathDB" id="HostDB:ENSMUSG00000014355"/>
<dbReference type="eggNOG" id="KOG1858">
    <property type="taxonomic scope" value="Eukaryota"/>
</dbReference>
<dbReference type="GeneTree" id="ENSGT00390000016757"/>
<dbReference type="HOGENOM" id="CLU_001202_1_0_1"/>
<dbReference type="InParanoid" id="P53995"/>
<dbReference type="OMA" id="MQPPDSR"/>
<dbReference type="OrthoDB" id="26401at2759"/>
<dbReference type="PhylomeDB" id="P53995"/>
<dbReference type="TreeFam" id="TF105441"/>
<dbReference type="Reactome" id="R-MMU-141430">
    <property type="pathway name" value="Inactivation of APC/C via direct inhibition of the APC/C complex"/>
</dbReference>
<dbReference type="Reactome" id="R-MMU-174048">
    <property type="pathway name" value="APC/C:Cdc20 mediated degradation of Cyclin B"/>
</dbReference>
<dbReference type="Reactome" id="R-MMU-174084">
    <property type="pathway name" value="Autodegradation of Cdh1 by Cdh1:APC/C"/>
</dbReference>
<dbReference type="Reactome" id="R-MMU-174154">
    <property type="pathway name" value="APC/C:Cdc20 mediated degradation of Securin"/>
</dbReference>
<dbReference type="Reactome" id="R-MMU-174178">
    <property type="pathway name" value="APC/C:Cdh1 mediated degradation of Cdc20 and other APC/C:Cdh1 targeted proteins in late mitosis/early G1"/>
</dbReference>
<dbReference type="Reactome" id="R-MMU-174184">
    <property type="pathway name" value="Cdc20:Phospho-APC/C mediated degradation of Cyclin A"/>
</dbReference>
<dbReference type="Reactome" id="R-MMU-176407">
    <property type="pathway name" value="Conversion from APC/C:Cdc20 to APC/C:Cdh1 in late anaphase"/>
</dbReference>
<dbReference type="Reactome" id="R-MMU-176408">
    <property type="pathway name" value="Regulation of APC/C activators between G1/S and early anaphase"/>
</dbReference>
<dbReference type="Reactome" id="R-MMU-176409">
    <property type="pathway name" value="APC/C:Cdc20 mediated degradation of mitotic proteins"/>
</dbReference>
<dbReference type="Reactome" id="R-MMU-176412">
    <property type="pathway name" value="Phosphorylation of the APC/C"/>
</dbReference>
<dbReference type="Reactome" id="R-MMU-179409">
    <property type="pathway name" value="APC-Cdc20 mediated degradation of Nek2A"/>
</dbReference>
<dbReference type="Reactome" id="R-MMU-2467813">
    <property type="pathway name" value="Separation of Sister Chromatids"/>
</dbReference>
<dbReference type="Reactome" id="R-MMU-2559582">
    <property type="pathway name" value="Senescence-Associated Secretory Phenotype (SASP)"/>
</dbReference>
<dbReference type="Reactome" id="R-MMU-68867">
    <property type="pathway name" value="Assembly of the pre-replicative complex"/>
</dbReference>
<dbReference type="Reactome" id="R-MMU-69017">
    <property type="pathway name" value="CDK-mediated phosphorylation and removal of Cdc6"/>
</dbReference>
<dbReference type="Reactome" id="R-MMU-983168">
    <property type="pathway name" value="Antigen processing: Ubiquitination &amp; Proteasome degradation"/>
</dbReference>
<dbReference type="UniPathway" id="UPA00143"/>
<dbReference type="BioGRID-ORCS" id="17222">
    <property type="hits" value="22 hits in 77 CRISPR screens"/>
</dbReference>
<dbReference type="ChiTaRS" id="Anapc1">
    <property type="organism name" value="mouse"/>
</dbReference>
<dbReference type="PRO" id="PR:P53995"/>
<dbReference type="Proteomes" id="UP000000589">
    <property type="component" value="Chromosome 2"/>
</dbReference>
<dbReference type="RNAct" id="P53995">
    <property type="molecule type" value="protein"/>
</dbReference>
<dbReference type="Bgee" id="ENSMUSG00000014355">
    <property type="expression patterns" value="Expressed in metanephric loop of Henle and 265 other cell types or tissues"/>
</dbReference>
<dbReference type="ExpressionAtlas" id="P53995">
    <property type="expression patterns" value="baseline and differential"/>
</dbReference>
<dbReference type="GO" id="GO:0005680">
    <property type="term" value="C:anaphase-promoting complex"/>
    <property type="evidence" value="ECO:0000250"/>
    <property type="project" value="UniProtKB"/>
</dbReference>
<dbReference type="GO" id="GO:0005634">
    <property type="term" value="C:nucleus"/>
    <property type="evidence" value="ECO:0000314"/>
    <property type="project" value="MGI"/>
</dbReference>
<dbReference type="GO" id="GO:0031145">
    <property type="term" value="P:anaphase-promoting complex-dependent catabolic process"/>
    <property type="evidence" value="ECO:0000250"/>
    <property type="project" value="UniProtKB"/>
</dbReference>
<dbReference type="GO" id="GO:0051301">
    <property type="term" value="P:cell division"/>
    <property type="evidence" value="ECO:0007669"/>
    <property type="project" value="UniProtKB-KW"/>
</dbReference>
<dbReference type="GO" id="GO:0141198">
    <property type="term" value="P:protein branched polyubiquitination"/>
    <property type="evidence" value="ECO:0000250"/>
    <property type="project" value="UniProtKB"/>
</dbReference>
<dbReference type="GO" id="GO:0070979">
    <property type="term" value="P:protein K11-linked ubiquitination"/>
    <property type="evidence" value="ECO:0000250"/>
    <property type="project" value="UniProtKB"/>
</dbReference>
<dbReference type="GO" id="GO:0070936">
    <property type="term" value="P:protein K48-linked ubiquitination"/>
    <property type="evidence" value="ECO:0000250"/>
    <property type="project" value="UniProtKB"/>
</dbReference>
<dbReference type="FunFam" id="1.25.10.10:FF:000075">
    <property type="entry name" value="Anaphase promoting complex subunit 1"/>
    <property type="match status" value="1"/>
</dbReference>
<dbReference type="FunFam" id="1.25.10.10:FF:000103">
    <property type="entry name" value="Anaphase promoting complex subunit 1"/>
    <property type="match status" value="1"/>
</dbReference>
<dbReference type="Gene3D" id="1.25.10.10">
    <property type="entry name" value="Leucine-rich Repeat Variant"/>
    <property type="match status" value="2"/>
</dbReference>
<dbReference type="InterPro" id="IPR024990">
    <property type="entry name" value="Apc1"/>
</dbReference>
<dbReference type="InterPro" id="IPR048971">
    <property type="entry name" value="Apc1_3rd"/>
</dbReference>
<dbReference type="InterPro" id="IPR041221">
    <property type="entry name" value="APC1_C"/>
</dbReference>
<dbReference type="InterPro" id="IPR046794">
    <property type="entry name" value="Apc1_MidN"/>
</dbReference>
<dbReference type="InterPro" id="IPR049255">
    <property type="entry name" value="Apc1_N"/>
</dbReference>
<dbReference type="InterPro" id="IPR011989">
    <property type="entry name" value="ARM-like"/>
</dbReference>
<dbReference type="InterPro" id="IPR002015">
    <property type="entry name" value="Proteasome/cyclosome_rpt"/>
</dbReference>
<dbReference type="PANTHER" id="PTHR12827:SF3">
    <property type="entry name" value="ANAPHASE-PROMOTING COMPLEX SUBUNIT 1"/>
    <property type="match status" value="1"/>
</dbReference>
<dbReference type="PANTHER" id="PTHR12827">
    <property type="entry name" value="MEIOTIC CHECKPOINT REGULATOR TSG24 FAMILY MEMBER"/>
    <property type="match status" value="1"/>
</dbReference>
<dbReference type="Pfam" id="PF12859">
    <property type="entry name" value="ANAPC1"/>
    <property type="match status" value="2"/>
</dbReference>
<dbReference type="Pfam" id="PF21282">
    <property type="entry name" value="APC1_3rd"/>
    <property type="match status" value="1"/>
</dbReference>
<dbReference type="Pfam" id="PF18122">
    <property type="entry name" value="APC1_C"/>
    <property type="match status" value="1"/>
</dbReference>
<dbReference type="Pfam" id="PF20518">
    <property type="entry name" value="Apc1_MidN"/>
    <property type="match status" value="1"/>
</dbReference>
<dbReference type="Pfam" id="PF01851">
    <property type="entry name" value="PC_rep"/>
    <property type="match status" value="1"/>
</dbReference>
<gene>
    <name type="primary">Anapc1</name>
    <name type="synonym">Mcpr</name>
    <name type="synonym">Tsg24</name>
</gene>
<evidence type="ECO:0000250" key="1">
    <source>
        <dbReference type="UniProtKB" id="Q9H1A4"/>
    </source>
</evidence>
<evidence type="ECO:0000256" key="2">
    <source>
        <dbReference type="SAM" id="MobiDB-lite"/>
    </source>
</evidence>
<evidence type="ECO:0000269" key="3">
    <source>
    </source>
</evidence>
<evidence type="ECO:0000305" key="4"/>
<evidence type="ECO:0007744" key="5">
    <source>
    </source>
</evidence>
<organism>
    <name type="scientific">Mus musculus</name>
    <name type="common">Mouse</name>
    <dbReference type="NCBI Taxonomy" id="10090"/>
    <lineage>
        <taxon>Eukaryota</taxon>
        <taxon>Metazoa</taxon>
        <taxon>Chordata</taxon>
        <taxon>Craniata</taxon>
        <taxon>Vertebrata</taxon>
        <taxon>Euteleostomi</taxon>
        <taxon>Mammalia</taxon>
        <taxon>Eutheria</taxon>
        <taxon>Euarchontoglires</taxon>
        <taxon>Glires</taxon>
        <taxon>Rodentia</taxon>
        <taxon>Myomorpha</taxon>
        <taxon>Muroidea</taxon>
        <taxon>Muridae</taxon>
        <taxon>Murinae</taxon>
        <taxon>Mus</taxon>
        <taxon>Mus</taxon>
    </lineage>
</organism>
<name>APC1_MOUSE</name>